<evidence type="ECO:0000255" key="1">
    <source>
        <dbReference type="HAMAP-Rule" id="MF_00048"/>
    </source>
</evidence>
<protein>
    <recommendedName>
        <fullName evidence="1">UPF0102 protein FTT_0898c</fullName>
    </recommendedName>
</protein>
<gene>
    <name type="ordered locus">FTT_0898c</name>
</gene>
<keyword id="KW-1185">Reference proteome</keyword>
<dbReference type="EMBL" id="AJ749949">
    <property type="protein sequence ID" value="CAG45531.1"/>
    <property type="molecule type" value="Genomic_DNA"/>
</dbReference>
<dbReference type="RefSeq" id="WP_003020901.1">
    <property type="nucleotide sequence ID" value="NC_006570.2"/>
</dbReference>
<dbReference type="RefSeq" id="YP_169895.1">
    <property type="nucleotide sequence ID" value="NC_006570.2"/>
</dbReference>
<dbReference type="SMR" id="Q5NGE7"/>
<dbReference type="STRING" id="177416.FTT_0898c"/>
<dbReference type="DNASU" id="3191698"/>
<dbReference type="EnsemblBacteria" id="CAG45531">
    <property type="protein sequence ID" value="CAG45531"/>
    <property type="gene ID" value="FTT_0898c"/>
</dbReference>
<dbReference type="KEGG" id="ftu:FTT_0898c"/>
<dbReference type="eggNOG" id="COG0792">
    <property type="taxonomic scope" value="Bacteria"/>
</dbReference>
<dbReference type="OrthoDB" id="9794876at2"/>
<dbReference type="Proteomes" id="UP000001174">
    <property type="component" value="Chromosome"/>
</dbReference>
<dbReference type="GO" id="GO:0003676">
    <property type="term" value="F:nucleic acid binding"/>
    <property type="evidence" value="ECO:0007669"/>
    <property type="project" value="InterPro"/>
</dbReference>
<dbReference type="Gene3D" id="3.40.1350.10">
    <property type="match status" value="1"/>
</dbReference>
<dbReference type="HAMAP" id="MF_00048">
    <property type="entry name" value="UPF0102"/>
    <property type="match status" value="1"/>
</dbReference>
<dbReference type="InterPro" id="IPR011335">
    <property type="entry name" value="Restrct_endonuc-II-like"/>
</dbReference>
<dbReference type="InterPro" id="IPR011856">
    <property type="entry name" value="tRNA_endonuc-like_dom_sf"/>
</dbReference>
<dbReference type="InterPro" id="IPR003509">
    <property type="entry name" value="UPF0102_YraN-like"/>
</dbReference>
<dbReference type="NCBIfam" id="NF009150">
    <property type="entry name" value="PRK12497.1-3"/>
    <property type="match status" value="1"/>
</dbReference>
<dbReference type="NCBIfam" id="NF011275">
    <property type="entry name" value="PRK14682.1"/>
    <property type="match status" value="1"/>
</dbReference>
<dbReference type="NCBIfam" id="TIGR00252">
    <property type="entry name" value="YraN family protein"/>
    <property type="match status" value="1"/>
</dbReference>
<dbReference type="PANTHER" id="PTHR34039">
    <property type="entry name" value="UPF0102 PROTEIN YRAN"/>
    <property type="match status" value="1"/>
</dbReference>
<dbReference type="PANTHER" id="PTHR34039:SF1">
    <property type="entry name" value="UPF0102 PROTEIN YRAN"/>
    <property type="match status" value="1"/>
</dbReference>
<dbReference type="Pfam" id="PF02021">
    <property type="entry name" value="UPF0102"/>
    <property type="match status" value="1"/>
</dbReference>
<dbReference type="SUPFAM" id="SSF52980">
    <property type="entry name" value="Restriction endonuclease-like"/>
    <property type="match status" value="1"/>
</dbReference>
<comment type="similarity">
    <text evidence="1">Belongs to the UPF0102 family.</text>
</comment>
<proteinExistence type="inferred from homology"/>
<name>Y898_FRATT</name>
<feature type="chain" id="PRO_0000336179" description="UPF0102 protein FTT_0898c">
    <location>
        <begin position="1"/>
        <end position="117"/>
    </location>
</feature>
<reference key="1">
    <citation type="journal article" date="2005" name="Nat. Genet.">
        <title>The complete genome sequence of Francisella tularensis, the causative agent of tularemia.</title>
        <authorList>
            <person name="Larsson P."/>
            <person name="Oyston P.C.F."/>
            <person name="Chain P."/>
            <person name="Chu M.C."/>
            <person name="Duffield M."/>
            <person name="Fuxelius H.-H."/>
            <person name="Garcia E."/>
            <person name="Haelltorp G."/>
            <person name="Johansson D."/>
            <person name="Isherwood K.E."/>
            <person name="Karp P.D."/>
            <person name="Larsson E."/>
            <person name="Liu Y."/>
            <person name="Michell S."/>
            <person name="Prior J."/>
            <person name="Prior R."/>
            <person name="Malfatti S."/>
            <person name="Sjoestedt A."/>
            <person name="Svensson K."/>
            <person name="Thompson N."/>
            <person name="Vergez L."/>
            <person name="Wagg J.K."/>
            <person name="Wren B.W."/>
            <person name="Lindler L.E."/>
            <person name="Andersson S.G.E."/>
            <person name="Forsman M."/>
            <person name="Titball R.W."/>
        </authorList>
    </citation>
    <scope>NUCLEOTIDE SEQUENCE [LARGE SCALE GENOMIC DNA]</scope>
    <source>
        <strain>SCHU S4 / Schu 4</strain>
    </source>
</reference>
<accession>Q5NGE7</accession>
<sequence>MQTIEIGNKAELQACKFLHTQALEILAHNFKALPYGEIDIIALDKDTLIFIEVKYRSKTKFAQAEEMLTYSKQQKLVNSASIYLQHNPQYQDYQCRFDLIAINESNINWIKNAFGVI</sequence>
<organism>
    <name type="scientific">Francisella tularensis subsp. tularensis (strain SCHU S4 / Schu 4)</name>
    <dbReference type="NCBI Taxonomy" id="177416"/>
    <lineage>
        <taxon>Bacteria</taxon>
        <taxon>Pseudomonadati</taxon>
        <taxon>Pseudomonadota</taxon>
        <taxon>Gammaproteobacteria</taxon>
        <taxon>Thiotrichales</taxon>
        <taxon>Francisellaceae</taxon>
        <taxon>Francisella</taxon>
    </lineage>
</organism>